<reference key="1">
    <citation type="journal article" date="1987" name="Mol. Gen. Genet.">
        <title>The ribosomal protein gene cluster of Mycoplasma capricolum.</title>
        <authorList>
            <person name="Ohkubo S."/>
            <person name="Muto A."/>
            <person name="Kawauchi Y."/>
            <person name="Yamao F."/>
            <person name="Osawa S."/>
        </authorList>
    </citation>
    <scope>NUCLEOTIDE SEQUENCE [GENOMIC DNA]</scope>
</reference>
<reference key="2">
    <citation type="submission" date="2005-09" db="EMBL/GenBank/DDBJ databases">
        <authorList>
            <person name="Glass J.I."/>
            <person name="Lartigue C."/>
            <person name="Pfannkoch C."/>
            <person name="Baden-Tillson H."/>
            <person name="Smith H.O."/>
            <person name="Venter J.C."/>
            <person name="Roske K."/>
            <person name="Wise K.S."/>
            <person name="Calcutt M.J."/>
            <person name="Nelson W.C."/>
            <person name="Nierman W.C."/>
        </authorList>
    </citation>
    <scope>NUCLEOTIDE SEQUENCE [LARGE SCALE GENOMIC DNA]</scope>
    <source>
        <strain>California kid / ATCC 27343 / NCTC 10154</strain>
    </source>
</reference>
<accession>P10140</accession>
<accession>Q2SRF5</accession>
<gene>
    <name evidence="1" type="primary">rplW</name>
    <name type="ordered locus">MCAP_0694</name>
</gene>
<keyword id="KW-0687">Ribonucleoprotein</keyword>
<keyword id="KW-0689">Ribosomal protein</keyword>
<keyword id="KW-0694">RNA-binding</keyword>
<keyword id="KW-0699">rRNA-binding</keyword>
<feature type="chain" id="PRO_0000129416" description="Large ribosomal subunit protein uL23">
    <location>
        <begin position="1"/>
        <end position="94"/>
    </location>
</feature>
<name>RL23_MYCCT</name>
<dbReference type="EMBL" id="X06414">
    <property type="protein sequence ID" value="CAA29706.1"/>
    <property type="molecule type" value="Genomic_DNA"/>
</dbReference>
<dbReference type="EMBL" id="CP000123">
    <property type="protein sequence ID" value="ABC01471.1"/>
    <property type="molecule type" value="Genomic_DNA"/>
</dbReference>
<dbReference type="PIR" id="S02833">
    <property type="entry name" value="R5YM23"/>
</dbReference>
<dbReference type="RefSeq" id="WP_011166911.1">
    <property type="nucleotide sequence ID" value="NC_007633.1"/>
</dbReference>
<dbReference type="SMR" id="P10140"/>
<dbReference type="GeneID" id="93426135"/>
<dbReference type="KEGG" id="mcp:MCAP_0694"/>
<dbReference type="HOGENOM" id="CLU_037562_3_2_14"/>
<dbReference type="PhylomeDB" id="P10140"/>
<dbReference type="Proteomes" id="UP000001928">
    <property type="component" value="Chromosome"/>
</dbReference>
<dbReference type="GO" id="GO:1990904">
    <property type="term" value="C:ribonucleoprotein complex"/>
    <property type="evidence" value="ECO:0007669"/>
    <property type="project" value="UniProtKB-KW"/>
</dbReference>
<dbReference type="GO" id="GO:0005840">
    <property type="term" value="C:ribosome"/>
    <property type="evidence" value="ECO:0007669"/>
    <property type="project" value="UniProtKB-KW"/>
</dbReference>
<dbReference type="GO" id="GO:0019843">
    <property type="term" value="F:rRNA binding"/>
    <property type="evidence" value="ECO:0007669"/>
    <property type="project" value="UniProtKB-UniRule"/>
</dbReference>
<dbReference type="GO" id="GO:0003735">
    <property type="term" value="F:structural constituent of ribosome"/>
    <property type="evidence" value="ECO:0007669"/>
    <property type="project" value="InterPro"/>
</dbReference>
<dbReference type="GO" id="GO:0006412">
    <property type="term" value="P:translation"/>
    <property type="evidence" value="ECO:0007669"/>
    <property type="project" value="UniProtKB-UniRule"/>
</dbReference>
<dbReference type="FunFam" id="3.30.70.330:FF:000001">
    <property type="entry name" value="50S ribosomal protein L23"/>
    <property type="match status" value="1"/>
</dbReference>
<dbReference type="Gene3D" id="3.30.70.330">
    <property type="match status" value="1"/>
</dbReference>
<dbReference type="HAMAP" id="MF_01369_B">
    <property type="entry name" value="Ribosomal_uL23_B"/>
    <property type="match status" value="1"/>
</dbReference>
<dbReference type="InterPro" id="IPR012677">
    <property type="entry name" value="Nucleotide-bd_a/b_plait_sf"/>
</dbReference>
<dbReference type="InterPro" id="IPR013025">
    <property type="entry name" value="Ribosomal_uL23-like"/>
</dbReference>
<dbReference type="InterPro" id="IPR012678">
    <property type="entry name" value="Ribosomal_uL23/eL15/eS24_sf"/>
</dbReference>
<dbReference type="InterPro" id="IPR001014">
    <property type="entry name" value="Ribosomal_uL23_CS"/>
</dbReference>
<dbReference type="NCBIfam" id="NF004363">
    <property type="entry name" value="PRK05738.2-4"/>
    <property type="match status" value="1"/>
</dbReference>
<dbReference type="PANTHER" id="PTHR11620">
    <property type="entry name" value="60S RIBOSOMAL PROTEIN L23A"/>
    <property type="match status" value="1"/>
</dbReference>
<dbReference type="Pfam" id="PF00276">
    <property type="entry name" value="Ribosomal_L23"/>
    <property type="match status" value="1"/>
</dbReference>
<dbReference type="SUPFAM" id="SSF54189">
    <property type="entry name" value="Ribosomal proteins S24e, L23 and L15e"/>
    <property type="match status" value="1"/>
</dbReference>
<dbReference type="PROSITE" id="PS00050">
    <property type="entry name" value="RIBOSOMAL_L23"/>
    <property type="match status" value="1"/>
</dbReference>
<protein>
    <recommendedName>
        <fullName evidence="1">Large ribosomal subunit protein uL23</fullName>
    </recommendedName>
    <alternativeName>
        <fullName evidence="2">50S ribosomal protein L23</fullName>
    </alternativeName>
</protein>
<organism>
    <name type="scientific">Mycoplasma capricolum subsp. capricolum (strain California kid / ATCC 27343 / NCTC 10154)</name>
    <dbReference type="NCBI Taxonomy" id="340047"/>
    <lineage>
        <taxon>Bacteria</taxon>
        <taxon>Bacillati</taxon>
        <taxon>Mycoplasmatota</taxon>
        <taxon>Mollicutes</taxon>
        <taxon>Mycoplasmataceae</taxon>
        <taxon>Mycoplasma</taxon>
    </lineage>
</organism>
<evidence type="ECO:0000255" key="1">
    <source>
        <dbReference type="HAMAP-Rule" id="MF_01369"/>
    </source>
</evidence>
<evidence type="ECO:0000305" key="2"/>
<sequence length="94" mass="10857">MHITEVLKKPVLTEKSFAGHKDNVYTFLVDKKANKVQIKKTFEEIFEVKVESVRTINYDAKEKRLGKYVGKKPSYKKAIITLKEGQKLDVLSDL</sequence>
<comment type="function">
    <text evidence="1">One of the early assembly proteins it binds 23S rRNA. One of the proteins that surrounds the polypeptide exit tunnel on the outside of the ribosome. Forms the main docking site for trigger factor binding to the ribosome.</text>
</comment>
<comment type="subunit">
    <text evidence="1">Part of the 50S ribosomal subunit. Contacts protein L29, and trigger factor when it is bound to the ribosome.</text>
</comment>
<comment type="similarity">
    <text evidence="1">Belongs to the universal ribosomal protein uL23 family.</text>
</comment>
<proteinExistence type="inferred from homology"/>